<comment type="function">
    <text evidence="1">Catalyzes a trans-dehydration via an enolate intermediate.</text>
</comment>
<comment type="catalytic activity">
    <reaction evidence="1">
        <text>3-dehydroquinate = 3-dehydroshikimate + H2O</text>
        <dbReference type="Rhea" id="RHEA:21096"/>
        <dbReference type="ChEBI" id="CHEBI:15377"/>
        <dbReference type="ChEBI" id="CHEBI:16630"/>
        <dbReference type="ChEBI" id="CHEBI:32364"/>
        <dbReference type="EC" id="4.2.1.10"/>
    </reaction>
</comment>
<comment type="pathway">
    <text evidence="1">Metabolic intermediate biosynthesis; chorismate biosynthesis; chorismate from D-erythrose 4-phosphate and phosphoenolpyruvate: step 3/7.</text>
</comment>
<comment type="subunit">
    <text evidence="1">Homododecamer.</text>
</comment>
<comment type="similarity">
    <text evidence="1">Belongs to the type-II 3-dehydroquinase family.</text>
</comment>
<proteinExistence type="inferred from homology"/>
<gene>
    <name evidence="1" type="primary">aroQ</name>
    <name type="ordered locus">TTE1279</name>
</gene>
<name>AROQ_CALS4</name>
<accession>Q8RAE4</accession>
<evidence type="ECO:0000255" key="1">
    <source>
        <dbReference type="HAMAP-Rule" id="MF_00169"/>
    </source>
</evidence>
<sequence>MKRVLVIHGPNVNLTGKREKEVYGEITFEEINNMIKREAAKLDIAVKIQQSNSEGEIINLIHSAENNFDAIIINPAAYTHYSLAIMDAIASVSVPVIEVHISNIFGREEFRKVSVTASRCKGVITGFGPYSYILALYAVKFLEDSIGG</sequence>
<reference key="1">
    <citation type="journal article" date="2002" name="Genome Res.">
        <title>A complete sequence of the T. tengcongensis genome.</title>
        <authorList>
            <person name="Bao Q."/>
            <person name="Tian Y."/>
            <person name="Li W."/>
            <person name="Xu Z."/>
            <person name="Xuan Z."/>
            <person name="Hu S."/>
            <person name="Dong W."/>
            <person name="Yang J."/>
            <person name="Chen Y."/>
            <person name="Xue Y."/>
            <person name="Xu Y."/>
            <person name="Lai X."/>
            <person name="Huang L."/>
            <person name="Dong X."/>
            <person name="Ma Y."/>
            <person name="Ling L."/>
            <person name="Tan H."/>
            <person name="Chen R."/>
            <person name="Wang J."/>
            <person name="Yu J."/>
            <person name="Yang H."/>
        </authorList>
    </citation>
    <scope>NUCLEOTIDE SEQUENCE [LARGE SCALE GENOMIC DNA]</scope>
    <source>
        <strain>DSM 15242 / JCM 11007 / NBRC 100824 / MB4</strain>
    </source>
</reference>
<keyword id="KW-0028">Amino-acid biosynthesis</keyword>
<keyword id="KW-0057">Aromatic amino acid biosynthesis</keyword>
<keyword id="KW-0456">Lyase</keyword>
<keyword id="KW-1185">Reference proteome</keyword>
<dbReference type="EC" id="4.2.1.10" evidence="1"/>
<dbReference type="EMBL" id="AE008691">
    <property type="protein sequence ID" value="AAM24503.1"/>
    <property type="molecule type" value="Genomic_DNA"/>
</dbReference>
<dbReference type="RefSeq" id="WP_011025594.1">
    <property type="nucleotide sequence ID" value="NC_003869.1"/>
</dbReference>
<dbReference type="SMR" id="Q8RAE4"/>
<dbReference type="STRING" id="273068.TTE1279"/>
<dbReference type="KEGG" id="tte:TTE1279"/>
<dbReference type="eggNOG" id="COG0757">
    <property type="taxonomic scope" value="Bacteria"/>
</dbReference>
<dbReference type="HOGENOM" id="CLU_090968_1_0_9"/>
<dbReference type="OrthoDB" id="9790793at2"/>
<dbReference type="UniPathway" id="UPA00053">
    <property type="reaction ID" value="UER00086"/>
</dbReference>
<dbReference type="Proteomes" id="UP000000555">
    <property type="component" value="Chromosome"/>
</dbReference>
<dbReference type="GO" id="GO:0003855">
    <property type="term" value="F:3-dehydroquinate dehydratase activity"/>
    <property type="evidence" value="ECO:0007669"/>
    <property type="project" value="UniProtKB-UniRule"/>
</dbReference>
<dbReference type="GO" id="GO:0008652">
    <property type="term" value="P:amino acid biosynthetic process"/>
    <property type="evidence" value="ECO:0007669"/>
    <property type="project" value="UniProtKB-KW"/>
</dbReference>
<dbReference type="GO" id="GO:0009073">
    <property type="term" value="P:aromatic amino acid family biosynthetic process"/>
    <property type="evidence" value="ECO:0007669"/>
    <property type="project" value="UniProtKB-KW"/>
</dbReference>
<dbReference type="GO" id="GO:0009423">
    <property type="term" value="P:chorismate biosynthetic process"/>
    <property type="evidence" value="ECO:0007669"/>
    <property type="project" value="UniProtKB-UniRule"/>
</dbReference>
<dbReference type="GO" id="GO:0019631">
    <property type="term" value="P:quinate catabolic process"/>
    <property type="evidence" value="ECO:0007669"/>
    <property type="project" value="TreeGrafter"/>
</dbReference>
<dbReference type="CDD" id="cd00466">
    <property type="entry name" value="DHQase_II"/>
    <property type="match status" value="1"/>
</dbReference>
<dbReference type="Gene3D" id="3.40.50.9100">
    <property type="entry name" value="Dehydroquinase, class II"/>
    <property type="match status" value="1"/>
</dbReference>
<dbReference type="HAMAP" id="MF_00169">
    <property type="entry name" value="AroQ"/>
    <property type="match status" value="1"/>
</dbReference>
<dbReference type="InterPro" id="IPR001874">
    <property type="entry name" value="DHquinase_II"/>
</dbReference>
<dbReference type="InterPro" id="IPR018509">
    <property type="entry name" value="DHquinase_II_CS"/>
</dbReference>
<dbReference type="InterPro" id="IPR036441">
    <property type="entry name" value="DHquinase_II_sf"/>
</dbReference>
<dbReference type="NCBIfam" id="TIGR01088">
    <property type="entry name" value="aroQ"/>
    <property type="match status" value="1"/>
</dbReference>
<dbReference type="NCBIfam" id="NF003805">
    <property type="entry name" value="PRK05395.1-2"/>
    <property type="match status" value="1"/>
</dbReference>
<dbReference type="NCBIfam" id="NF003806">
    <property type="entry name" value="PRK05395.1-3"/>
    <property type="match status" value="1"/>
</dbReference>
<dbReference type="NCBIfam" id="NF003807">
    <property type="entry name" value="PRK05395.1-4"/>
    <property type="match status" value="1"/>
</dbReference>
<dbReference type="PANTHER" id="PTHR21272">
    <property type="entry name" value="CATABOLIC 3-DEHYDROQUINASE"/>
    <property type="match status" value="1"/>
</dbReference>
<dbReference type="PANTHER" id="PTHR21272:SF3">
    <property type="entry name" value="CATABOLIC 3-DEHYDROQUINASE"/>
    <property type="match status" value="1"/>
</dbReference>
<dbReference type="Pfam" id="PF01220">
    <property type="entry name" value="DHquinase_II"/>
    <property type="match status" value="1"/>
</dbReference>
<dbReference type="PIRSF" id="PIRSF001399">
    <property type="entry name" value="DHquinase_II"/>
    <property type="match status" value="1"/>
</dbReference>
<dbReference type="SUPFAM" id="SSF52304">
    <property type="entry name" value="Type II 3-dehydroquinate dehydratase"/>
    <property type="match status" value="1"/>
</dbReference>
<dbReference type="PROSITE" id="PS01029">
    <property type="entry name" value="DEHYDROQUINASE_II"/>
    <property type="match status" value="1"/>
</dbReference>
<protein>
    <recommendedName>
        <fullName evidence="1">3-dehydroquinate dehydratase</fullName>
        <shortName evidence="1">3-dehydroquinase</shortName>
        <ecNumber evidence="1">4.2.1.10</ecNumber>
    </recommendedName>
    <alternativeName>
        <fullName evidence="1">Type II DHQase</fullName>
    </alternativeName>
</protein>
<organism>
    <name type="scientific">Caldanaerobacter subterraneus subsp. tengcongensis (strain DSM 15242 / JCM 11007 / NBRC 100824 / MB4)</name>
    <name type="common">Thermoanaerobacter tengcongensis</name>
    <dbReference type="NCBI Taxonomy" id="273068"/>
    <lineage>
        <taxon>Bacteria</taxon>
        <taxon>Bacillati</taxon>
        <taxon>Bacillota</taxon>
        <taxon>Clostridia</taxon>
        <taxon>Thermoanaerobacterales</taxon>
        <taxon>Thermoanaerobacteraceae</taxon>
        <taxon>Caldanaerobacter</taxon>
    </lineage>
</organism>
<feature type="chain" id="PRO_0000159936" description="3-dehydroquinate dehydratase">
    <location>
        <begin position="1"/>
        <end position="148"/>
    </location>
</feature>
<feature type="active site" description="Proton acceptor" evidence="1">
    <location>
        <position position="23"/>
    </location>
</feature>
<feature type="active site" description="Proton donor" evidence="1">
    <location>
        <position position="100"/>
    </location>
</feature>
<feature type="binding site" evidence="1">
    <location>
        <position position="74"/>
    </location>
    <ligand>
        <name>substrate</name>
    </ligand>
</feature>
<feature type="binding site" evidence="1">
    <location>
        <position position="80"/>
    </location>
    <ligand>
        <name>substrate</name>
    </ligand>
</feature>
<feature type="binding site" evidence="1">
    <location>
        <position position="87"/>
    </location>
    <ligand>
        <name>substrate</name>
    </ligand>
</feature>
<feature type="binding site" evidence="1">
    <location>
        <begin position="101"/>
        <end position="102"/>
    </location>
    <ligand>
        <name>substrate</name>
    </ligand>
</feature>
<feature type="binding site" evidence="1">
    <location>
        <position position="111"/>
    </location>
    <ligand>
        <name>substrate</name>
    </ligand>
</feature>
<feature type="site" description="Transition state stabilizer" evidence="1">
    <location>
        <position position="18"/>
    </location>
</feature>